<organism>
    <name type="scientific">Brucella suis biovar 1 (strain 1330)</name>
    <dbReference type="NCBI Taxonomy" id="204722"/>
    <lineage>
        <taxon>Bacteria</taxon>
        <taxon>Pseudomonadati</taxon>
        <taxon>Pseudomonadota</taxon>
        <taxon>Alphaproteobacteria</taxon>
        <taxon>Hyphomicrobiales</taxon>
        <taxon>Brucellaceae</taxon>
        <taxon>Brucella/Ochrobactrum group</taxon>
        <taxon>Brucella</taxon>
    </lineage>
</organism>
<accession>Q7CEG0</accession>
<accession>G0KER6</accession>
<accession>Q7BQL7</accession>
<reference key="1">
    <citation type="journal article" date="1999" name="Mol. Microbiol.">
        <title>A homologue of the Agrobacterium tumefaciens VirB and Bordetella pertussis Ptl type IV secretion systems is essential for intracellular survival of Brucella suis.</title>
        <authorList>
            <person name="O'Callaghan D."/>
            <person name="Cazevieille C."/>
            <person name="Allardet-Servent A."/>
            <person name="Boschiroli M.L."/>
            <person name="Bourg G."/>
            <person name="Foulongne V."/>
            <person name="Frutos P."/>
            <person name="Kulakov Y."/>
            <person name="Ramuz M."/>
        </authorList>
    </citation>
    <scope>NUCLEOTIDE SEQUENCE [GENOMIC DNA]</scope>
    <source>
        <strain>1330</strain>
    </source>
</reference>
<reference key="2">
    <citation type="journal article" date="2002" name="Proc. Natl. Acad. Sci. U.S.A.">
        <title>The Brucella suis virB operon is induced intracellularly in macrophages.</title>
        <authorList>
            <person name="Boschiroli M.L."/>
            <person name="Ouahrani-Bettache S."/>
            <person name="Foulongne V."/>
            <person name="Michaux-Charachon S."/>
            <person name="Bourg G."/>
            <person name="Allardet-Servent A."/>
            <person name="Cazevieille C."/>
            <person name="Liautard J.P."/>
            <person name="Ramuz M."/>
            <person name="O'Callaghan D."/>
        </authorList>
    </citation>
    <scope>NUCLEOTIDE SEQUENCE [GENOMIC DNA]</scope>
    <scope>EXPRESSION CONDITIONS</scope>
    <source>
        <strain>1330</strain>
    </source>
</reference>
<reference key="3">
    <citation type="journal article" date="2002" name="Proc. Natl. Acad. Sci. U.S.A.">
        <title>The Brucella suis genome reveals fundamental similarities between animal and plant pathogens and symbionts.</title>
        <authorList>
            <person name="Paulsen I.T."/>
            <person name="Seshadri R."/>
            <person name="Nelson K.E."/>
            <person name="Eisen J.A."/>
            <person name="Heidelberg J.F."/>
            <person name="Read T.D."/>
            <person name="Dodson R.J."/>
            <person name="Umayam L.A."/>
            <person name="Brinkac L.M."/>
            <person name="Beanan M.J."/>
            <person name="Daugherty S.C."/>
            <person name="DeBoy R.T."/>
            <person name="Durkin A.S."/>
            <person name="Kolonay J.F."/>
            <person name="Madupu R."/>
            <person name="Nelson W.C."/>
            <person name="Ayodeji B."/>
            <person name="Kraul M."/>
            <person name="Shetty J."/>
            <person name="Malek J.A."/>
            <person name="Van Aken S.E."/>
            <person name="Riedmuller S."/>
            <person name="Tettelin H."/>
            <person name="Gill S.R."/>
            <person name="White O."/>
            <person name="Salzberg S.L."/>
            <person name="Hoover D.L."/>
            <person name="Lindler L.E."/>
            <person name="Halling S.M."/>
            <person name="Boyle S.M."/>
            <person name="Fraser C.M."/>
        </authorList>
    </citation>
    <scope>NUCLEOTIDE SEQUENCE [LARGE SCALE GENOMIC DNA]</scope>
    <source>
        <strain>1330</strain>
    </source>
</reference>
<reference key="4">
    <citation type="journal article" date="2011" name="J. Bacteriol.">
        <title>Revised genome sequence of Brucella suis 1330.</title>
        <authorList>
            <person name="Tae H."/>
            <person name="Shallom S."/>
            <person name="Settlage R."/>
            <person name="Preston D."/>
            <person name="Adams L.G."/>
            <person name="Garner H.R."/>
        </authorList>
    </citation>
    <scope>NUCLEOTIDE SEQUENCE [LARGE SCALE GENOMIC DNA]</scope>
    <source>
        <strain>1330</strain>
    </source>
</reference>
<dbReference type="EMBL" id="AF141604">
    <property type="protein sequence ID" value="AAD56612.1"/>
    <property type="molecule type" value="Genomic_DNA"/>
</dbReference>
<dbReference type="EMBL" id="AE014292">
    <property type="protein sequence ID" value="AAN33280.1"/>
    <property type="molecule type" value="Genomic_DNA"/>
</dbReference>
<dbReference type="EMBL" id="CP002998">
    <property type="protein sequence ID" value="AEM19560.1"/>
    <property type="molecule type" value="Genomic_DNA"/>
</dbReference>
<dbReference type="RefSeq" id="WP_002967165.1">
    <property type="nucleotide sequence ID" value="NZ_KN046805.1"/>
</dbReference>
<dbReference type="SMR" id="Q7CEG0"/>
<dbReference type="KEGG" id="bms:BRA0068"/>
<dbReference type="KEGG" id="bsi:BS1330_II0068"/>
<dbReference type="PATRIC" id="fig|204722.21.peg.2302"/>
<dbReference type="HOGENOM" id="CLU_155084_1_1_5"/>
<dbReference type="PRO" id="PR:Q7CEG0"/>
<dbReference type="Proteomes" id="UP000007104">
    <property type="component" value="Chromosome II"/>
</dbReference>
<dbReference type="GO" id="GO:0005886">
    <property type="term" value="C:plasma membrane"/>
    <property type="evidence" value="ECO:0007669"/>
    <property type="project" value="UniProtKB-SubCell"/>
</dbReference>
<dbReference type="InterPro" id="IPR007039">
    <property type="entry name" value="TrbC/VirB2"/>
</dbReference>
<dbReference type="Pfam" id="PF04956">
    <property type="entry name" value="TrbC"/>
    <property type="match status" value="1"/>
</dbReference>
<keyword id="KW-1003">Cell membrane</keyword>
<keyword id="KW-0472">Membrane</keyword>
<keyword id="KW-0732">Signal</keyword>
<keyword id="KW-0812">Transmembrane</keyword>
<keyword id="KW-1133">Transmembrane helix</keyword>
<keyword id="KW-0843">Virulence</keyword>
<name>VIRB2_BRUSU</name>
<feature type="signal peptide" evidence="1">
    <location>
        <begin position="1"/>
        <end position="36"/>
    </location>
</feature>
<feature type="chain" id="PRO_0000291452" description="Type IV secretion system protein virB2">
    <location>
        <begin position="37"/>
        <end position="105"/>
    </location>
</feature>
<feature type="transmembrane region" description="Helical" evidence="1">
    <location>
        <begin position="50"/>
        <end position="70"/>
    </location>
</feature>
<feature type="transmembrane region" description="Helical" evidence="1">
    <location>
        <begin position="83"/>
        <end position="103"/>
    </location>
</feature>
<sequence>MKTASPSKKSLSRILPHLLLALIVSIAAIEPNLAHANGGLDKVNTSMQKVLDLLSGVSITIVTIAIIWSGYKMAFRHARFMDVVPVLGGALVVGAAAEIASYLLR</sequence>
<gene>
    <name type="primary">virB2</name>
    <name type="ordered locus">BRA0068</name>
    <name type="ordered locus">BS1330_II0068</name>
</gene>
<protein>
    <recommendedName>
        <fullName>Type IV secretion system protein virB2</fullName>
    </recommendedName>
</protein>
<evidence type="ECO:0000255" key="1"/>
<evidence type="ECO:0000305" key="2"/>
<proteinExistence type="evidence at transcript level"/>
<comment type="function">
    <text>The VirB system could be required for the establishment of the replication niche in the host.</text>
</comment>
<comment type="subcellular location">
    <subcellularLocation>
        <location evidence="2">Cell membrane</location>
        <topology evidence="2">Multi-pass membrane protein</topology>
    </subcellularLocation>
</comment>
<comment type="induction">
    <text>Specifically induced within macrophages by phagosome acidification. Induced at 37 degrees Celsius in minimal medium, suggesting that nutritional stress is a regulating signal.</text>
</comment>
<comment type="miscellaneous">
    <text>Transcription of the operon is maximal in early exponential phase.</text>
</comment>
<comment type="similarity">
    <text evidence="2">Belongs to the PtlA family.</text>
</comment>